<evidence type="ECO:0000255" key="1">
    <source>
        <dbReference type="HAMAP-Rule" id="MF_00583"/>
    </source>
</evidence>
<reference key="1">
    <citation type="journal article" date="2002" name="Proc. Natl. Acad. Sci. U.S.A.">
        <title>Genome sequence of a serotype M3 strain of group A Streptococcus: phage-encoded toxins, the high-virulence phenotype, and clone emergence.</title>
        <authorList>
            <person name="Beres S.B."/>
            <person name="Sylva G.L."/>
            <person name="Barbian K.D."/>
            <person name="Lei B."/>
            <person name="Hoff J.S."/>
            <person name="Mammarella N.D."/>
            <person name="Liu M.-Y."/>
            <person name="Smoot J.C."/>
            <person name="Porcella S.F."/>
            <person name="Parkins L.D."/>
            <person name="Campbell D.S."/>
            <person name="Smith T.M."/>
            <person name="McCormick J.K."/>
            <person name="Leung D.Y.M."/>
            <person name="Schlievert P.M."/>
            <person name="Musser J.M."/>
        </authorList>
    </citation>
    <scope>NUCLEOTIDE SEQUENCE [LARGE SCALE GENOMIC DNA]</scope>
    <source>
        <strain>ATCC BAA-595 / MGAS315</strain>
    </source>
</reference>
<comment type="function">
    <text evidence="1">Involved in the biosynthesis of the central metabolite phospho-alpha-D-ribosyl-1-pyrophosphate (PRPP) via the transfer of pyrophosphoryl group from ATP to 1-hydroxyl of ribose-5-phosphate (Rib-5-P).</text>
</comment>
<comment type="catalytic activity">
    <reaction evidence="1">
        <text>D-ribose 5-phosphate + ATP = 5-phospho-alpha-D-ribose 1-diphosphate + AMP + H(+)</text>
        <dbReference type="Rhea" id="RHEA:15609"/>
        <dbReference type="ChEBI" id="CHEBI:15378"/>
        <dbReference type="ChEBI" id="CHEBI:30616"/>
        <dbReference type="ChEBI" id="CHEBI:58017"/>
        <dbReference type="ChEBI" id="CHEBI:78346"/>
        <dbReference type="ChEBI" id="CHEBI:456215"/>
        <dbReference type="EC" id="2.7.6.1"/>
    </reaction>
</comment>
<comment type="cofactor">
    <cofactor evidence="1">
        <name>Mg(2+)</name>
        <dbReference type="ChEBI" id="CHEBI:18420"/>
    </cofactor>
    <text evidence="1">Binds 2 Mg(2+) ions per subunit.</text>
</comment>
<comment type="pathway">
    <text evidence="1">Metabolic intermediate biosynthesis; 5-phospho-alpha-D-ribose 1-diphosphate biosynthesis; 5-phospho-alpha-D-ribose 1-diphosphate from D-ribose 5-phosphate (route I): step 1/1.</text>
</comment>
<comment type="subunit">
    <text evidence="1">Homohexamer.</text>
</comment>
<comment type="subcellular location">
    <subcellularLocation>
        <location evidence="1">Cytoplasm</location>
    </subcellularLocation>
</comment>
<comment type="similarity">
    <text evidence="1">Belongs to the ribose-phosphate pyrophosphokinase family. Class I subfamily.</text>
</comment>
<feature type="chain" id="PRO_0000141210" description="Ribose-phosphate pyrophosphokinase 1">
    <location>
        <begin position="1"/>
        <end position="320"/>
    </location>
</feature>
<feature type="active site" evidence="1">
    <location>
        <position position="196"/>
    </location>
</feature>
<feature type="binding site" evidence="1">
    <location>
        <begin position="39"/>
        <end position="41"/>
    </location>
    <ligand>
        <name>ATP</name>
        <dbReference type="ChEBI" id="CHEBI:30616"/>
    </ligand>
</feature>
<feature type="binding site" evidence="1">
    <location>
        <begin position="98"/>
        <end position="99"/>
    </location>
    <ligand>
        <name>ATP</name>
        <dbReference type="ChEBI" id="CHEBI:30616"/>
    </ligand>
</feature>
<feature type="binding site" evidence="1">
    <location>
        <position position="132"/>
    </location>
    <ligand>
        <name>Mg(2+)</name>
        <dbReference type="ChEBI" id="CHEBI:18420"/>
        <label>1</label>
    </ligand>
</feature>
<feature type="binding site" evidence="1">
    <location>
        <position position="173"/>
    </location>
    <ligand>
        <name>Mg(2+)</name>
        <dbReference type="ChEBI" id="CHEBI:18420"/>
        <label>2</label>
    </ligand>
</feature>
<feature type="binding site" evidence="1">
    <location>
        <position position="198"/>
    </location>
    <ligand>
        <name>D-ribose 5-phosphate</name>
        <dbReference type="ChEBI" id="CHEBI:78346"/>
    </ligand>
</feature>
<feature type="binding site" evidence="1">
    <location>
        <position position="224"/>
    </location>
    <ligand>
        <name>D-ribose 5-phosphate</name>
        <dbReference type="ChEBI" id="CHEBI:78346"/>
    </ligand>
</feature>
<feature type="binding site" evidence="1">
    <location>
        <begin position="228"/>
        <end position="232"/>
    </location>
    <ligand>
        <name>D-ribose 5-phosphate</name>
        <dbReference type="ChEBI" id="CHEBI:78346"/>
    </ligand>
</feature>
<keyword id="KW-0067">ATP-binding</keyword>
<keyword id="KW-0963">Cytoplasm</keyword>
<keyword id="KW-0418">Kinase</keyword>
<keyword id="KW-0460">Magnesium</keyword>
<keyword id="KW-0479">Metal-binding</keyword>
<keyword id="KW-0545">Nucleotide biosynthesis</keyword>
<keyword id="KW-0547">Nucleotide-binding</keyword>
<keyword id="KW-0808">Transferase</keyword>
<organism>
    <name type="scientific">Streptococcus pyogenes serotype M3 (strain ATCC BAA-595 / MGAS315)</name>
    <dbReference type="NCBI Taxonomy" id="198466"/>
    <lineage>
        <taxon>Bacteria</taxon>
        <taxon>Bacillati</taxon>
        <taxon>Bacillota</taxon>
        <taxon>Bacilli</taxon>
        <taxon>Lactobacillales</taxon>
        <taxon>Streptococcaceae</taxon>
        <taxon>Streptococcus</taxon>
    </lineage>
</organism>
<gene>
    <name evidence="1" type="primary">prs1</name>
    <name type="synonym">prsA</name>
    <name type="synonym">prsA.1</name>
    <name type="ordered locus">SpyM3_0015</name>
</gene>
<protein>
    <recommendedName>
        <fullName evidence="1">Ribose-phosphate pyrophosphokinase 1</fullName>
        <shortName evidence="1">RPPK 1</shortName>
        <ecNumber evidence="1">2.7.6.1</ecNumber>
    </recommendedName>
    <alternativeName>
        <fullName evidence="1">5-phospho-D-ribosyl alpha-1-diphosphate synthase 1</fullName>
    </alternativeName>
    <alternativeName>
        <fullName evidence="1">Phosphoribosyl diphosphate synthase 1</fullName>
    </alternativeName>
    <alternativeName>
        <fullName evidence="1">Phosphoribosyl pyrophosphate synthase 1</fullName>
        <shortName evidence="1">P-Rib-PP synthase 1</shortName>
        <shortName evidence="1">PRPP synthase 1</shortName>
        <shortName evidence="1">PRPPase 1</shortName>
    </alternativeName>
</protein>
<name>KPRS1_STRP3</name>
<accession>P0DB98</accession>
<accession>P65244</accession>
<accession>Q9A1Z7</accession>
<sequence length="320" mass="35044">MSYSDLKLFALSSNKELAEKVASAMGIQLGKSTVRQFSDGEIQVNIEESIRGHHVFILQSTSSPVNDNLMEILIMVDALKRASAEKISVVMPYYGYARQDRKARSREPITSKLVANMLEVAGVDRLLTVDLHAAQIQGFFDIPVDHLMGAPLIADYFDRHGLVGEDVVVVSPDHGGVTRARKLAQFLQTPIAIIDKRRSVDKMNTSEVMNIIGNVSGKKCILIDDMIDTAGTICHAADALAEAGATAVYASCTHPVLSGPALDNIQRSAIEKLIVLDTIYLPKERLIDKIEQISIADLVAEAIIRIHEKRPLSPLFEMGN</sequence>
<proteinExistence type="inferred from homology"/>
<dbReference type="EC" id="2.7.6.1" evidence="1"/>
<dbReference type="EMBL" id="AE014074">
    <property type="protein sequence ID" value="AAM78622.1"/>
    <property type="molecule type" value="Genomic_DNA"/>
</dbReference>
<dbReference type="RefSeq" id="WP_002986722.1">
    <property type="nucleotide sequence ID" value="NC_004070.1"/>
</dbReference>
<dbReference type="SMR" id="P0DB98"/>
<dbReference type="KEGG" id="spg:SpyM3_0015"/>
<dbReference type="HOGENOM" id="CLU_033546_4_0_9"/>
<dbReference type="UniPathway" id="UPA00087">
    <property type="reaction ID" value="UER00172"/>
</dbReference>
<dbReference type="Proteomes" id="UP000000564">
    <property type="component" value="Chromosome"/>
</dbReference>
<dbReference type="GO" id="GO:0005737">
    <property type="term" value="C:cytoplasm"/>
    <property type="evidence" value="ECO:0007669"/>
    <property type="project" value="UniProtKB-SubCell"/>
</dbReference>
<dbReference type="GO" id="GO:0002189">
    <property type="term" value="C:ribose phosphate diphosphokinase complex"/>
    <property type="evidence" value="ECO:0007669"/>
    <property type="project" value="TreeGrafter"/>
</dbReference>
<dbReference type="GO" id="GO:0005524">
    <property type="term" value="F:ATP binding"/>
    <property type="evidence" value="ECO:0007669"/>
    <property type="project" value="UniProtKB-KW"/>
</dbReference>
<dbReference type="GO" id="GO:0016301">
    <property type="term" value="F:kinase activity"/>
    <property type="evidence" value="ECO:0007669"/>
    <property type="project" value="UniProtKB-KW"/>
</dbReference>
<dbReference type="GO" id="GO:0000287">
    <property type="term" value="F:magnesium ion binding"/>
    <property type="evidence" value="ECO:0007669"/>
    <property type="project" value="UniProtKB-UniRule"/>
</dbReference>
<dbReference type="GO" id="GO:0004749">
    <property type="term" value="F:ribose phosphate diphosphokinase activity"/>
    <property type="evidence" value="ECO:0007669"/>
    <property type="project" value="UniProtKB-UniRule"/>
</dbReference>
<dbReference type="GO" id="GO:0006015">
    <property type="term" value="P:5-phosphoribose 1-diphosphate biosynthetic process"/>
    <property type="evidence" value="ECO:0007669"/>
    <property type="project" value="UniProtKB-UniRule"/>
</dbReference>
<dbReference type="GO" id="GO:0006164">
    <property type="term" value="P:purine nucleotide biosynthetic process"/>
    <property type="evidence" value="ECO:0007669"/>
    <property type="project" value="TreeGrafter"/>
</dbReference>
<dbReference type="GO" id="GO:0009156">
    <property type="term" value="P:ribonucleoside monophosphate biosynthetic process"/>
    <property type="evidence" value="ECO:0007669"/>
    <property type="project" value="InterPro"/>
</dbReference>
<dbReference type="CDD" id="cd06223">
    <property type="entry name" value="PRTases_typeI"/>
    <property type="match status" value="1"/>
</dbReference>
<dbReference type="FunFam" id="3.40.50.2020:FF:000001">
    <property type="entry name" value="Ribose-phosphate pyrophosphokinase"/>
    <property type="match status" value="1"/>
</dbReference>
<dbReference type="Gene3D" id="3.40.50.2020">
    <property type="match status" value="2"/>
</dbReference>
<dbReference type="HAMAP" id="MF_00583_B">
    <property type="entry name" value="RibP_PPkinase_B"/>
    <property type="match status" value="1"/>
</dbReference>
<dbReference type="InterPro" id="IPR000842">
    <property type="entry name" value="PRib_PP_synth_CS"/>
</dbReference>
<dbReference type="InterPro" id="IPR029099">
    <property type="entry name" value="Pribosyltran_N"/>
</dbReference>
<dbReference type="InterPro" id="IPR000836">
    <property type="entry name" value="PRibTrfase_dom"/>
</dbReference>
<dbReference type="InterPro" id="IPR029057">
    <property type="entry name" value="PRTase-like"/>
</dbReference>
<dbReference type="InterPro" id="IPR005946">
    <property type="entry name" value="Rib-P_diPkinase"/>
</dbReference>
<dbReference type="InterPro" id="IPR037515">
    <property type="entry name" value="Rib-P_diPkinase_bac"/>
</dbReference>
<dbReference type="NCBIfam" id="NF002320">
    <property type="entry name" value="PRK01259.1"/>
    <property type="match status" value="1"/>
</dbReference>
<dbReference type="NCBIfam" id="NF002618">
    <property type="entry name" value="PRK02269.1"/>
    <property type="match status" value="1"/>
</dbReference>
<dbReference type="NCBIfam" id="TIGR01251">
    <property type="entry name" value="ribP_PPkin"/>
    <property type="match status" value="1"/>
</dbReference>
<dbReference type="PANTHER" id="PTHR10210">
    <property type="entry name" value="RIBOSE-PHOSPHATE DIPHOSPHOKINASE FAMILY MEMBER"/>
    <property type="match status" value="1"/>
</dbReference>
<dbReference type="PANTHER" id="PTHR10210:SF41">
    <property type="entry name" value="RIBOSE-PHOSPHATE PYROPHOSPHOKINASE 1, CHLOROPLASTIC"/>
    <property type="match status" value="1"/>
</dbReference>
<dbReference type="Pfam" id="PF14572">
    <property type="entry name" value="Pribosyl_synth"/>
    <property type="match status" value="1"/>
</dbReference>
<dbReference type="Pfam" id="PF13793">
    <property type="entry name" value="Pribosyltran_N"/>
    <property type="match status" value="1"/>
</dbReference>
<dbReference type="SMART" id="SM01400">
    <property type="entry name" value="Pribosyltran_N"/>
    <property type="match status" value="1"/>
</dbReference>
<dbReference type="SUPFAM" id="SSF53271">
    <property type="entry name" value="PRTase-like"/>
    <property type="match status" value="1"/>
</dbReference>
<dbReference type="PROSITE" id="PS00114">
    <property type="entry name" value="PRPP_SYNTHASE"/>
    <property type="match status" value="1"/>
</dbReference>